<accession>Q3AAT6</accession>
<feature type="chain" id="PRO_0000230212" description="Histidinol-phosphate aminotransferase 2">
    <location>
        <begin position="1"/>
        <end position="362"/>
    </location>
</feature>
<feature type="modified residue" description="N6-(pyridoxal phosphate)lysine" evidence="1">
    <location>
        <position position="222"/>
    </location>
</feature>
<dbReference type="EC" id="2.6.1.9" evidence="1"/>
<dbReference type="EMBL" id="CP000141">
    <property type="protein sequence ID" value="ABB16170.1"/>
    <property type="molecule type" value="Genomic_DNA"/>
</dbReference>
<dbReference type="RefSeq" id="WP_011344821.1">
    <property type="nucleotide sequence ID" value="NC_007503.1"/>
</dbReference>
<dbReference type="SMR" id="Q3AAT6"/>
<dbReference type="FunCoup" id="Q3AAT6">
    <property type="interactions" value="388"/>
</dbReference>
<dbReference type="STRING" id="246194.CHY_1929"/>
<dbReference type="KEGG" id="chy:CHY_1929"/>
<dbReference type="eggNOG" id="COG0079">
    <property type="taxonomic scope" value="Bacteria"/>
</dbReference>
<dbReference type="HOGENOM" id="CLU_017584_3_3_9"/>
<dbReference type="InParanoid" id="Q3AAT6"/>
<dbReference type="OrthoDB" id="9813612at2"/>
<dbReference type="UniPathway" id="UPA00031">
    <property type="reaction ID" value="UER00012"/>
</dbReference>
<dbReference type="Proteomes" id="UP000002706">
    <property type="component" value="Chromosome"/>
</dbReference>
<dbReference type="GO" id="GO:0004400">
    <property type="term" value="F:histidinol-phosphate transaminase activity"/>
    <property type="evidence" value="ECO:0007669"/>
    <property type="project" value="UniProtKB-UniRule"/>
</dbReference>
<dbReference type="GO" id="GO:0030170">
    <property type="term" value="F:pyridoxal phosphate binding"/>
    <property type="evidence" value="ECO:0007669"/>
    <property type="project" value="InterPro"/>
</dbReference>
<dbReference type="GO" id="GO:0000105">
    <property type="term" value="P:L-histidine biosynthetic process"/>
    <property type="evidence" value="ECO:0007669"/>
    <property type="project" value="UniProtKB-UniRule"/>
</dbReference>
<dbReference type="CDD" id="cd00609">
    <property type="entry name" value="AAT_like"/>
    <property type="match status" value="1"/>
</dbReference>
<dbReference type="Gene3D" id="3.90.1150.10">
    <property type="entry name" value="Aspartate Aminotransferase, domain 1"/>
    <property type="match status" value="1"/>
</dbReference>
<dbReference type="Gene3D" id="3.40.640.10">
    <property type="entry name" value="Type I PLP-dependent aspartate aminotransferase-like (Major domain)"/>
    <property type="match status" value="1"/>
</dbReference>
<dbReference type="HAMAP" id="MF_01023">
    <property type="entry name" value="HisC_aminotrans_2"/>
    <property type="match status" value="1"/>
</dbReference>
<dbReference type="InterPro" id="IPR001917">
    <property type="entry name" value="Aminotrans_II_pyridoxalP_BS"/>
</dbReference>
<dbReference type="InterPro" id="IPR004839">
    <property type="entry name" value="Aminotransferase_I/II_large"/>
</dbReference>
<dbReference type="InterPro" id="IPR005861">
    <property type="entry name" value="HisP_aminotrans"/>
</dbReference>
<dbReference type="InterPro" id="IPR050106">
    <property type="entry name" value="HistidinolP_aminotransfase"/>
</dbReference>
<dbReference type="InterPro" id="IPR015424">
    <property type="entry name" value="PyrdxlP-dep_Trfase"/>
</dbReference>
<dbReference type="InterPro" id="IPR015421">
    <property type="entry name" value="PyrdxlP-dep_Trfase_major"/>
</dbReference>
<dbReference type="InterPro" id="IPR015422">
    <property type="entry name" value="PyrdxlP-dep_Trfase_small"/>
</dbReference>
<dbReference type="NCBIfam" id="TIGR01141">
    <property type="entry name" value="hisC"/>
    <property type="match status" value="1"/>
</dbReference>
<dbReference type="PANTHER" id="PTHR43643:SF3">
    <property type="entry name" value="HISTIDINOL-PHOSPHATE AMINOTRANSFERASE"/>
    <property type="match status" value="1"/>
</dbReference>
<dbReference type="PANTHER" id="PTHR43643">
    <property type="entry name" value="HISTIDINOL-PHOSPHATE AMINOTRANSFERASE 2"/>
    <property type="match status" value="1"/>
</dbReference>
<dbReference type="Pfam" id="PF00155">
    <property type="entry name" value="Aminotran_1_2"/>
    <property type="match status" value="1"/>
</dbReference>
<dbReference type="SUPFAM" id="SSF53383">
    <property type="entry name" value="PLP-dependent transferases"/>
    <property type="match status" value="1"/>
</dbReference>
<dbReference type="PROSITE" id="PS00599">
    <property type="entry name" value="AA_TRANSFER_CLASS_2"/>
    <property type="match status" value="1"/>
</dbReference>
<sequence length="362" mass="40662">MVRKALENLKPYVPGKPVEEVERELGITNIDKLASNENLWGISPKVAAAIKEAVDKVNYYPDGGAFRLKEKIAAKYGVTPDNIILGNGSDELVMFLAMALIDPGDEAIMPVPSFPRYEPVVTMMNGIAREIPLKEHRLDLKTMAEAVNEKTRLVYLCNPNNPTGTYITKGELEEFLERVPEEVVVVLDEAYFEFARLFNDYPDGLNFFKKRPNTVVLRTFSKAYGLAGLRVGYGFAPENLAKAINSLRPPFNVNFLAQMAAVAALDDEEYVREVVKNTDEGKKFLYQEIIRMGLSYIPSAANFLMIKTEKPSALVFRELLKRGVIVRSGDIFGMDDWIRVTVGTPVQNARFINELKMVLEIL</sequence>
<protein>
    <recommendedName>
        <fullName evidence="1">Histidinol-phosphate aminotransferase 2</fullName>
        <ecNumber evidence="1">2.6.1.9</ecNumber>
    </recommendedName>
    <alternativeName>
        <fullName evidence="1">Imidazole acetol-phosphate transaminase 2</fullName>
    </alternativeName>
</protein>
<name>HIS82_CARHZ</name>
<reference key="1">
    <citation type="journal article" date="2005" name="PLoS Genet.">
        <title>Life in hot carbon monoxide: the complete genome sequence of Carboxydothermus hydrogenoformans Z-2901.</title>
        <authorList>
            <person name="Wu M."/>
            <person name="Ren Q."/>
            <person name="Durkin A.S."/>
            <person name="Daugherty S.C."/>
            <person name="Brinkac L.M."/>
            <person name="Dodson R.J."/>
            <person name="Madupu R."/>
            <person name="Sullivan S.A."/>
            <person name="Kolonay J.F."/>
            <person name="Nelson W.C."/>
            <person name="Tallon L.J."/>
            <person name="Jones K.M."/>
            <person name="Ulrich L.E."/>
            <person name="Gonzalez J.M."/>
            <person name="Zhulin I.B."/>
            <person name="Robb F.T."/>
            <person name="Eisen J.A."/>
        </authorList>
    </citation>
    <scope>NUCLEOTIDE SEQUENCE [LARGE SCALE GENOMIC DNA]</scope>
    <source>
        <strain>ATCC BAA-161 / DSM 6008 / Z-2901</strain>
    </source>
</reference>
<gene>
    <name evidence="1" type="primary">hisC2</name>
    <name type="ordered locus">CHY_1929</name>
</gene>
<organism>
    <name type="scientific">Carboxydothermus hydrogenoformans (strain ATCC BAA-161 / DSM 6008 / Z-2901)</name>
    <dbReference type="NCBI Taxonomy" id="246194"/>
    <lineage>
        <taxon>Bacteria</taxon>
        <taxon>Bacillati</taxon>
        <taxon>Bacillota</taxon>
        <taxon>Clostridia</taxon>
        <taxon>Thermoanaerobacterales</taxon>
        <taxon>Thermoanaerobacteraceae</taxon>
        <taxon>Carboxydothermus</taxon>
    </lineage>
</organism>
<proteinExistence type="inferred from homology"/>
<keyword id="KW-0028">Amino-acid biosynthesis</keyword>
<keyword id="KW-0032">Aminotransferase</keyword>
<keyword id="KW-0368">Histidine biosynthesis</keyword>
<keyword id="KW-0663">Pyridoxal phosphate</keyword>
<keyword id="KW-1185">Reference proteome</keyword>
<keyword id="KW-0808">Transferase</keyword>
<evidence type="ECO:0000255" key="1">
    <source>
        <dbReference type="HAMAP-Rule" id="MF_01023"/>
    </source>
</evidence>
<comment type="catalytic activity">
    <reaction evidence="1">
        <text>L-histidinol phosphate + 2-oxoglutarate = 3-(imidazol-4-yl)-2-oxopropyl phosphate + L-glutamate</text>
        <dbReference type="Rhea" id="RHEA:23744"/>
        <dbReference type="ChEBI" id="CHEBI:16810"/>
        <dbReference type="ChEBI" id="CHEBI:29985"/>
        <dbReference type="ChEBI" id="CHEBI:57766"/>
        <dbReference type="ChEBI" id="CHEBI:57980"/>
        <dbReference type="EC" id="2.6.1.9"/>
    </reaction>
</comment>
<comment type="cofactor">
    <cofactor evidence="1">
        <name>pyridoxal 5'-phosphate</name>
        <dbReference type="ChEBI" id="CHEBI:597326"/>
    </cofactor>
</comment>
<comment type="pathway">
    <text evidence="1">Amino-acid biosynthesis; L-histidine biosynthesis; L-histidine from 5-phospho-alpha-D-ribose 1-diphosphate: step 7/9.</text>
</comment>
<comment type="subunit">
    <text evidence="1">Homodimer.</text>
</comment>
<comment type="similarity">
    <text evidence="1">Belongs to the class-II pyridoxal-phosphate-dependent aminotransferase family. Histidinol-phosphate aminotransferase subfamily.</text>
</comment>